<protein>
    <recommendedName>
        <fullName evidence="1">Mannosyl-3-phosphoglycerate phosphatase</fullName>
        <shortName evidence="1">MPGP</shortName>
        <ecNumber evidence="1">3.1.3.70</ecNumber>
    </recommendedName>
</protein>
<accession>Q8U381</accession>
<keyword id="KW-0963">Cytoplasm</keyword>
<keyword id="KW-0378">Hydrolase</keyword>
<keyword id="KW-0460">Magnesium</keyword>
<keyword id="KW-0479">Metal-binding</keyword>
<keyword id="KW-1185">Reference proteome</keyword>
<evidence type="ECO:0000255" key="1">
    <source>
        <dbReference type="HAMAP-Rule" id="MF_00617"/>
    </source>
</evidence>
<feature type="chain" id="PRO_0000184972" description="Mannosyl-3-phosphoglycerate phosphatase">
    <location>
        <begin position="1"/>
        <end position="242"/>
    </location>
</feature>
<feature type="active site" description="Nucleophile" evidence="1">
    <location>
        <position position="8"/>
    </location>
</feature>
<feature type="binding site" evidence="1">
    <location>
        <position position="8"/>
    </location>
    <ligand>
        <name>Mg(2+)</name>
        <dbReference type="ChEBI" id="CHEBI:18420"/>
    </ligand>
</feature>
<feature type="binding site" evidence="1">
    <location>
        <position position="10"/>
    </location>
    <ligand>
        <name>Mg(2+)</name>
        <dbReference type="ChEBI" id="CHEBI:18420"/>
    </ligand>
</feature>
<feature type="binding site" evidence="1">
    <location>
        <position position="169"/>
    </location>
    <ligand>
        <name>Mg(2+)</name>
        <dbReference type="ChEBI" id="CHEBI:18420"/>
    </ligand>
</feature>
<feature type="binding site" evidence="1">
    <location>
        <position position="204"/>
    </location>
    <ligand>
        <name>Mg(2+)</name>
        <dbReference type="ChEBI" id="CHEBI:18420"/>
    </ligand>
</feature>
<dbReference type="EC" id="3.1.3.70" evidence="1"/>
<dbReference type="EMBL" id="AE009950">
    <property type="protein sequence ID" value="AAL80714.1"/>
    <property type="molecule type" value="Genomic_DNA"/>
</dbReference>
<dbReference type="SMR" id="Q8U381"/>
<dbReference type="STRING" id="186497.PF0590"/>
<dbReference type="PaxDb" id="186497-PF0590"/>
<dbReference type="KEGG" id="pfu:PF0590"/>
<dbReference type="PATRIC" id="fig|186497.12.peg.619"/>
<dbReference type="eggNOG" id="arCOG01215">
    <property type="taxonomic scope" value="Archaea"/>
</dbReference>
<dbReference type="HOGENOM" id="CLU_063016_0_0_2"/>
<dbReference type="OrthoDB" id="120822at2157"/>
<dbReference type="PhylomeDB" id="Q8U381"/>
<dbReference type="UniPathway" id="UPA00130">
    <property type="reaction ID" value="UER00193"/>
</dbReference>
<dbReference type="Proteomes" id="UP000001013">
    <property type="component" value="Chromosome"/>
</dbReference>
<dbReference type="GO" id="GO:0005829">
    <property type="term" value="C:cytosol"/>
    <property type="evidence" value="ECO:0007669"/>
    <property type="project" value="TreeGrafter"/>
</dbReference>
<dbReference type="GO" id="GO:0000287">
    <property type="term" value="F:magnesium ion binding"/>
    <property type="evidence" value="ECO:0007669"/>
    <property type="project" value="TreeGrafter"/>
</dbReference>
<dbReference type="GO" id="GO:0050531">
    <property type="term" value="F:mannosyl-3-phosphoglycerate phosphatase activity"/>
    <property type="evidence" value="ECO:0007669"/>
    <property type="project" value="UniProtKB-UniRule"/>
</dbReference>
<dbReference type="GO" id="GO:0051479">
    <property type="term" value="P:mannosylglycerate biosynthetic process"/>
    <property type="evidence" value="ECO:0007669"/>
    <property type="project" value="UniProtKB-UniRule"/>
</dbReference>
<dbReference type="CDD" id="cd07507">
    <property type="entry name" value="HAD_Pase"/>
    <property type="match status" value="1"/>
</dbReference>
<dbReference type="Gene3D" id="3.40.50.1000">
    <property type="entry name" value="HAD superfamily/HAD-like"/>
    <property type="match status" value="1"/>
</dbReference>
<dbReference type="Gene3D" id="3.30.980.20">
    <property type="entry name" value="Putative mannosyl-3-phosphoglycerate phosphatase, domain 2"/>
    <property type="match status" value="1"/>
</dbReference>
<dbReference type="HAMAP" id="MF_00617">
    <property type="entry name" value="MPGP_rel"/>
    <property type="match status" value="1"/>
</dbReference>
<dbReference type="InterPro" id="IPR036412">
    <property type="entry name" value="HAD-like_sf"/>
</dbReference>
<dbReference type="InterPro" id="IPR006381">
    <property type="entry name" value="HAD-SF-IIB-MPGP"/>
</dbReference>
<dbReference type="InterPro" id="IPR006379">
    <property type="entry name" value="HAD-SF_hydro_IIB"/>
</dbReference>
<dbReference type="InterPro" id="IPR023214">
    <property type="entry name" value="HAD_sf"/>
</dbReference>
<dbReference type="InterPro" id="IPR012815">
    <property type="entry name" value="MPG_Pase"/>
</dbReference>
<dbReference type="InterPro" id="IPR033980">
    <property type="entry name" value="MPG_Pase_thermophiles"/>
</dbReference>
<dbReference type="NCBIfam" id="TIGR01484">
    <property type="entry name" value="HAD-SF-IIB"/>
    <property type="match status" value="1"/>
</dbReference>
<dbReference type="NCBIfam" id="TIGR01486">
    <property type="entry name" value="HAD-SF-IIB-MPGP"/>
    <property type="match status" value="1"/>
</dbReference>
<dbReference type="NCBIfam" id="TIGR02461">
    <property type="entry name" value="osmo_MPG_phos"/>
    <property type="match status" value="1"/>
</dbReference>
<dbReference type="PANTHER" id="PTHR10000:SF8">
    <property type="entry name" value="HAD SUPERFAMILY HYDROLASE-LIKE, TYPE 3"/>
    <property type="match status" value="1"/>
</dbReference>
<dbReference type="PANTHER" id="PTHR10000">
    <property type="entry name" value="PHOSPHOSERINE PHOSPHATASE"/>
    <property type="match status" value="1"/>
</dbReference>
<dbReference type="Pfam" id="PF08282">
    <property type="entry name" value="Hydrolase_3"/>
    <property type="match status" value="2"/>
</dbReference>
<dbReference type="SFLD" id="SFLDG01142">
    <property type="entry name" value="C2.B.2:_Mannosyl-3-phosphoglyc"/>
    <property type="match status" value="1"/>
</dbReference>
<dbReference type="SFLD" id="SFLDF00042">
    <property type="entry name" value="mannosyl-3-phosphoglycerate_ph"/>
    <property type="match status" value="1"/>
</dbReference>
<dbReference type="SUPFAM" id="SSF56784">
    <property type="entry name" value="HAD-like"/>
    <property type="match status" value="1"/>
</dbReference>
<name>MPGP_PYRFU</name>
<comment type="function">
    <text evidence="1">Hydrolyzes mannosyl-3-phosphoglycerate (MPG) to form the osmolyte mannosylglycerate (MG).</text>
</comment>
<comment type="catalytic activity">
    <reaction evidence="1">
        <text>2-O-(alpha-D-mannosyl)-3-phosphoglycerate + H2O = (2R)-2-O-(alpha-D-mannosyl)-glycerate + phosphate</text>
        <dbReference type="Rhea" id="RHEA:19309"/>
        <dbReference type="ChEBI" id="CHEBI:15377"/>
        <dbReference type="ChEBI" id="CHEBI:43474"/>
        <dbReference type="ChEBI" id="CHEBI:57541"/>
        <dbReference type="ChEBI" id="CHEBI:57744"/>
        <dbReference type="EC" id="3.1.3.70"/>
    </reaction>
</comment>
<comment type="cofactor">
    <cofactor evidence="1">
        <name>Mg(2+)</name>
        <dbReference type="ChEBI" id="CHEBI:18420"/>
    </cofactor>
</comment>
<comment type="pathway">
    <text evidence="1">Carbohydrate biosynthesis; 2-(alpha-D-mannosyl)-D-glycerate biosynthesis; 2-(alpha-D-mannosyl)-D-glycerate from GDP-alpha-D-mannose (MPG route): step 2/2.</text>
</comment>
<comment type="subcellular location">
    <subcellularLocation>
        <location evidence="1">Cytoplasm</location>
    </subcellularLocation>
</comment>
<comment type="similarity">
    <text evidence="1">Belongs to the HAD-like hydrolase superfamily. MPGP family.</text>
</comment>
<proteinExistence type="inferred from homology"/>
<organism>
    <name type="scientific">Pyrococcus furiosus (strain ATCC 43587 / DSM 3638 / JCM 8422 / Vc1)</name>
    <dbReference type="NCBI Taxonomy" id="186497"/>
    <lineage>
        <taxon>Archaea</taxon>
        <taxon>Methanobacteriati</taxon>
        <taxon>Methanobacteriota</taxon>
        <taxon>Thermococci</taxon>
        <taxon>Thermococcales</taxon>
        <taxon>Thermococcaceae</taxon>
        <taxon>Pyrococcus</taxon>
    </lineage>
</organism>
<reference key="1">
    <citation type="journal article" date="1999" name="Genetics">
        <title>Divergence of the hyperthermophilic archaea Pyrococcus furiosus and P. horikoshii inferred from complete genomic sequences.</title>
        <authorList>
            <person name="Maeder D.L."/>
            <person name="Weiss R.B."/>
            <person name="Dunn D.M."/>
            <person name="Cherry J.L."/>
            <person name="Gonzalez J.M."/>
            <person name="DiRuggiero J."/>
            <person name="Robb F.T."/>
        </authorList>
    </citation>
    <scope>NUCLEOTIDE SEQUENCE [LARGE SCALE GENOMIC DNA]</scope>
    <source>
        <strain>ATCC 43587 / DSM 3638 / JCM 8422 / Vc1</strain>
    </source>
</reference>
<sequence>MIRVIFLDLDKTLLPEYDPEPAIPIVEELKKKGFEIVFNSSKTRAEQEYYREKLNVKGPFIVENGSAIYIPSNYFPFEVPGVKRGEYMVLELGVKVEEIRKALKELEAEYGLKYYGNSTDEEIEKFTKLPKHLIPLAKDREYSETIFLWKREGWEKDLIRKGFKVTMGSRFYAVHGNSDKGKAAKLLLDLYKRVDEVESYAVGDGENDFPMFDVVDFAFLIGDLRHENAENVTSIKDVLKKI</sequence>
<gene>
    <name evidence="1" type="primary">mngB</name>
    <name type="ordered locus">PF0590</name>
</gene>